<proteinExistence type="evidence at protein level"/>
<comment type="function">
    <text evidence="1 2">Cleaves the N-terminal amino acid of tripeptides.</text>
</comment>
<comment type="catalytic activity">
    <reaction evidence="1 2">
        <text>Release of the N-terminal residue from a tripeptide.</text>
        <dbReference type="EC" id="3.4.11.4"/>
    </reaction>
</comment>
<comment type="cofactor">
    <cofactor evidence="1">
        <name>Zn(2+)</name>
        <dbReference type="ChEBI" id="CHEBI:29105"/>
    </cofactor>
    <text evidence="1">Binds 2 Zn(2+) ions per subunit.</text>
</comment>
<comment type="biophysicochemical properties">
    <kinetics>
        <text evidence="2">kcat is 639 sec(-1) with GGF tripeptide as substrate. kcat is 915 sec(-1) with GGA tripeptide as substrate. kcat is 1015 sec(-1) with GAA tripeptide as substrate. kcat is 1219 sec(-1) with GAY tripeptide as substrate. kcat is 373 sec(-1) with AAA tripeptide as substrate. kcat is 1640 sec(-1) with AAG tripeptide as substrate.</text>
    </kinetics>
    <phDependence>
        <text evidence="2">Optimum pH is around 8.</text>
    </phDependence>
    <temperatureDependence>
        <text evidence="2">Optimum temperature is slightly lower than 40 degrees Celsius.</text>
    </temperatureDependence>
</comment>
<comment type="subcellular location">
    <subcellularLocation>
        <location evidence="1">Cytoplasm</location>
    </subcellularLocation>
</comment>
<comment type="similarity">
    <text evidence="1">Belongs to the peptidase M20B family.</text>
</comment>
<reference key="1">
    <citation type="journal article" date="2004" name="Syst. Appl. Microbiol.">
        <title>Phylogenetic analysis of Lactococcus lactis subspecies based on decoding the sequence of the pepT tripeptidase gene, the pepV dipeptidase gene and 16S rRNA.</title>
        <authorList>
            <person name="Mori S."/>
            <person name="Mori K."/>
            <person name="Suzuki I."/>
            <person name="Kasumi T."/>
        </authorList>
    </citation>
    <scope>NUCLEOTIDE SEQUENCE [GENOMIC DNA]</scope>
    <source>
        <strain>ATCC 29071 / DSM 20450 / JCM 1180 / KCTC 3768 / NBRC 100931 / NCDO 2181 / NCIMB 702181 / HC-1</strain>
    </source>
</reference>
<reference key="2">
    <citation type="journal article" date="2005" name="Biochim. Biophys. Acta">
        <title>Characterization and kinetic analysis of enzyme-substrate recognition by three recombinant lactococcal tripeptidases.</title>
        <authorList>
            <person name="Mori S."/>
            <person name="Nirasawa S."/>
            <person name="Komba S."/>
            <person name="Kasumi T."/>
        </authorList>
    </citation>
    <scope>PROTEIN SEQUENCE OF N-TERMINUS</scope>
    <scope>FUNCTION</scope>
    <scope>CATALYTIC ACTIVITY</scope>
    <scope>BIOPHYSICOCHEMICAL PROPERTIES</scope>
    <source>
        <strain>ATCC 29071 / DSM 20450 / JCM 1180 / KCTC 3768 / NBRC 100931 / NCDO 2181 / NCIMB 702181 / HC-1</strain>
    </source>
</reference>
<dbReference type="EC" id="3.4.11.4" evidence="1 2"/>
<dbReference type="EMBL" id="AB100774">
    <property type="protein sequence ID" value="BAC66674.1"/>
    <property type="molecule type" value="Genomic_DNA"/>
</dbReference>
<dbReference type="RefSeq" id="WP_058210196.1">
    <property type="nucleotide sequence ID" value="NZ_VXKC01000010.1"/>
</dbReference>
<dbReference type="SMR" id="Q84BV2"/>
<dbReference type="SABIO-RK" id="Q84BV2"/>
<dbReference type="GO" id="GO:0005829">
    <property type="term" value="C:cytosol"/>
    <property type="evidence" value="ECO:0007669"/>
    <property type="project" value="TreeGrafter"/>
</dbReference>
<dbReference type="GO" id="GO:0008237">
    <property type="term" value="F:metallopeptidase activity"/>
    <property type="evidence" value="ECO:0007669"/>
    <property type="project" value="UniProtKB-KW"/>
</dbReference>
<dbReference type="GO" id="GO:0045148">
    <property type="term" value="F:tripeptide aminopeptidase activity"/>
    <property type="evidence" value="ECO:0000314"/>
    <property type="project" value="UniProtKB"/>
</dbReference>
<dbReference type="GO" id="GO:0008270">
    <property type="term" value="F:zinc ion binding"/>
    <property type="evidence" value="ECO:0007669"/>
    <property type="project" value="UniProtKB-UniRule"/>
</dbReference>
<dbReference type="GO" id="GO:0043171">
    <property type="term" value="P:peptide catabolic process"/>
    <property type="evidence" value="ECO:0007669"/>
    <property type="project" value="UniProtKB-UniRule"/>
</dbReference>
<dbReference type="GO" id="GO:0006518">
    <property type="term" value="P:peptide metabolic process"/>
    <property type="evidence" value="ECO:0000314"/>
    <property type="project" value="UniProtKB"/>
</dbReference>
<dbReference type="GO" id="GO:0006508">
    <property type="term" value="P:proteolysis"/>
    <property type="evidence" value="ECO:0000314"/>
    <property type="project" value="UniProtKB"/>
</dbReference>
<dbReference type="CDD" id="cd03892">
    <property type="entry name" value="M20_peptT"/>
    <property type="match status" value="1"/>
</dbReference>
<dbReference type="FunFam" id="3.30.70.360:FF:000002">
    <property type="entry name" value="Peptidase T"/>
    <property type="match status" value="1"/>
</dbReference>
<dbReference type="Gene3D" id="3.30.70.360">
    <property type="match status" value="1"/>
</dbReference>
<dbReference type="Gene3D" id="3.40.630.10">
    <property type="entry name" value="Zn peptidases"/>
    <property type="match status" value="1"/>
</dbReference>
<dbReference type="HAMAP" id="MF_00550">
    <property type="entry name" value="Aminopeptidase_M20"/>
    <property type="match status" value="1"/>
</dbReference>
<dbReference type="InterPro" id="IPR001261">
    <property type="entry name" value="ArgE/DapE_CS"/>
</dbReference>
<dbReference type="InterPro" id="IPR036264">
    <property type="entry name" value="Bact_exopeptidase_dim_dom"/>
</dbReference>
<dbReference type="InterPro" id="IPR002933">
    <property type="entry name" value="Peptidase_M20"/>
</dbReference>
<dbReference type="InterPro" id="IPR011650">
    <property type="entry name" value="Peptidase_M20_dimer"/>
</dbReference>
<dbReference type="InterPro" id="IPR010161">
    <property type="entry name" value="Peptidase_M20B"/>
</dbReference>
<dbReference type="NCBIfam" id="TIGR01882">
    <property type="entry name" value="peptidase-T"/>
    <property type="match status" value="1"/>
</dbReference>
<dbReference type="NCBIfam" id="NF003976">
    <property type="entry name" value="PRK05469.1"/>
    <property type="match status" value="1"/>
</dbReference>
<dbReference type="NCBIfam" id="NF009920">
    <property type="entry name" value="PRK13381.1"/>
    <property type="match status" value="1"/>
</dbReference>
<dbReference type="PANTHER" id="PTHR42994">
    <property type="entry name" value="PEPTIDASE T"/>
    <property type="match status" value="1"/>
</dbReference>
<dbReference type="PANTHER" id="PTHR42994:SF1">
    <property type="entry name" value="PEPTIDASE T"/>
    <property type="match status" value="1"/>
</dbReference>
<dbReference type="Pfam" id="PF07687">
    <property type="entry name" value="M20_dimer"/>
    <property type="match status" value="1"/>
</dbReference>
<dbReference type="Pfam" id="PF01546">
    <property type="entry name" value="Peptidase_M20"/>
    <property type="match status" value="1"/>
</dbReference>
<dbReference type="PIRSF" id="PIRSF037215">
    <property type="entry name" value="Peptidase_M20B"/>
    <property type="match status" value="1"/>
</dbReference>
<dbReference type="SUPFAM" id="SSF55031">
    <property type="entry name" value="Bacterial exopeptidase dimerisation domain"/>
    <property type="match status" value="1"/>
</dbReference>
<dbReference type="SUPFAM" id="SSF53187">
    <property type="entry name" value="Zn-dependent exopeptidases"/>
    <property type="match status" value="1"/>
</dbReference>
<dbReference type="PROSITE" id="PS00758">
    <property type="entry name" value="ARGE_DAPE_CPG2_1"/>
    <property type="match status" value="1"/>
</dbReference>
<dbReference type="PROSITE" id="PS00759">
    <property type="entry name" value="ARGE_DAPE_CPG2_2"/>
    <property type="match status" value="1"/>
</dbReference>
<feature type="chain" id="PRO_0000431584" description="Peptidase T">
    <location>
        <begin position="1"/>
        <end position="413"/>
    </location>
</feature>
<feature type="active site" evidence="1">
    <location>
        <position position="83"/>
    </location>
</feature>
<feature type="active site" description="Proton acceptor" evidence="1">
    <location>
        <position position="178"/>
    </location>
</feature>
<feature type="binding site" evidence="1">
    <location>
        <position position="81"/>
    </location>
    <ligand>
        <name>Zn(2+)</name>
        <dbReference type="ChEBI" id="CHEBI:29105"/>
        <label>1</label>
    </ligand>
</feature>
<feature type="binding site" evidence="1">
    <location>
        <position position="143"/>
    </location>
    <ligand>
        <name>Zn(2+)</name>
        <dbReference type="ChEBI" id="CHEBI:29105"/>
        <label>1</label>
    </ligand>
</feature>
<feature type="binding site" evidence="1">
    <location>
        <position position="143"/>
    </location>
    <ligand>
        <name>Zn(2+)</name>
        <dbReference type="ChEBI" id="CHEBI:29105"/>
        <label>2</label>
    </ligand>
</feature>
<feature type="binding site" evidence="1">
    <location>
        <position position="179"/>
    </location>
    <ligand>
        <name>Zn(2+)</name>
        <dbReference type="ChEBI" id="CHEBI:29105"/>
        <label>2</label>
    </ligand>
</feature>
<feature type="binding site" evidence="1">
    <location>
        <position position="201"/>
    </location>
    <ligand>
        <name>Zn(2+)</name>
        <dbReference type="ChEBI" id="CHEBI:29105"/>
        <label>1</label>
    </ligand>
</feature>
<feature type="binding site" evidence="1">
    <location>
        <position position="383"/>
    </location>
    <ligand>
        <name>Zn(2+)</name>
        <dbReference type="ChEBI" id="CHEBI:29105"/>
        <label>2</label>
    </ligand>
</feature>
<keyword id="KW-0031">Aminopeptidase</keyword>
<keyword id="KW-0963">Cytoplasm</keyword>
<keyword id="KW-0903">Direct protein sequencing</keyword>
<keyword id="KW-0378">Hydrolase</keyword>
<keyword id="KW-0479">Metal-binding</keyword>
<keyword id="KW-0482">Metalloprotease</keyword>
<keyword id="KW-0645">Protease</keyword>
<keyword id="KW-0862">Zinc</keyword>
<name>PEPT_LACLH</name>
<organism>
    <name type="scientific">Lactococcus lactis subsp. hordniae</name>
    <dbReference type="NCBI Taxonomy" id="203404"/>
    <lineage>
        <taxon>Bacteria</taxon>
        <taxon>Bacillati</taxon>
        <taxon>Bacillota</taxon>
        <taxon>Bacilli</taxon>
        <taxon>Lactobacillales</taxon>
        <taxon>Streptococcaceae</taxon>
        <taxon>Lactococcus</taxon>
    </lineage>
</organism>
<evidence type="ECO:0000255" key="1">
    <source>
        <dbReference type="HAMAP-Rule" id="MF_00550"/>
    </source>
</evidence>
<evidence type="ECO:0000269" key="2">
    <source>
    </source>
</evidence>
<evidence type="ECO:0000303" key="3">
    <source>
    </source>
</evidence>
<sequence length="413" mass="45993">MKYEKLLPRFLEYVKVNTRSDENSTTTPSTQALVEFAHKMGEDMKALGLKDVHYLESNGYVIGTIPANTDKKVRKIGLLAHLDTADFNAEGVNPQILENYDGESVIKLGDTEFTLDPKDFPSLKNYKGQTLVHTDGTTLLGSDDKSGVAEIMTLAEYLLNINPDFEHGEIRVGFGPDEEIGVGADKFDVADFDVDFAYTVDGGPLGELQYETFSAAGAVIEFQGKNVHPGTAKNTMVNALQLAIDYHNALPEFDRPEKTEGREGFFHLLKLDGTPEEARAQYIIRDHEEGKFNERKALMQEIADKMNAEFGQNRVKPVIKDQYYNMAQIIEKDMSIIDIAKKAMENLDIVPIIEPIRGGTDGSKISFMGLPTPNLFAGGENMHGRFEFVSVQTMEKAVDTLLEIIRLNNEVVK</sequence>
<protein>
    <recommendedName>
        <fullName evidence="1">Peptidase T</fullName>
        <ecNumber evidence="1 2">3.4.11.4</ecNumber>
    </recommendedName>
    <alternativeName>
        <fullName evidence="1">Aminotripeptidase</fullName>
        <shortName evidence="1 3">Tripeptidase</shortName>
    </alternativeName>
    <alternativeName>
        <fullName evidence="1">Tripeptide aminopeptidase</fullName>
    </alternativeName>
    <alternativeName>
        <fullName evidence="3">hTPepTR</fullName>
    </alternativeName>
</protein>
<gene>
    <name evidence="1 3" type="primary">pepT</name>
</gene>
<accession>Q84BV2</accession>